<evidence type="ECO:0000255" key="1">
    <source>
        <dbReference type="HAMAP-Rule" id="MF_03150"/>
    </source>
</evidence>
<evidence type="ECO:0000256" key="2">
    <source>
        <dbReference type="SAM" id="MobiDB-lite"/>
    </source>
</evidence>
<sequence>MLSTVQNPRFLLRQCRHFPPKRRRFHSSTPLFLSQPQTLASTDPPSSPPQSQILTIRDNLINRRTTAVELAQLSLNRLRLTEPQINSFISVSETVLREAEEIDAKIARNEELGPLAGVFVGVKDNICTADMPSTGGSRILENYRPPFDATAVKRVKDCGGIVVGKTNLDEFGMGSTTEGSAFQVTANPWDVSRVPGGSSGGSAAAVSARQCVVSLGSDTGGSVRQPASFCGVVGLKPTYGRVSRFGLMAYASSLDVIGCFGSSVADTGILLHAIAGYDGLDSTSSKHEVPNYTSQFMSISSLESKPLKGLRVGLIRETLDDGVDKAVVSSIVGAASHLEELGCTVTEVSLPSFSLGLPAYYILASSESSSNLSRYDGVRYGSQVGADRLNSLYGDSRAKGFGPEVKMRILTGTYALSAGYYDAYYKRAQQVRTLVQKSFKAALNENDILISPAAPSPAYSIGEKKNDPLAMYAGDIMTVNVNLAGLPALVLPCGFVEGGPAGLPVGLQMIGAAFDEEKLLKVGHIFEQMLKGYKFIPPLLADGIAC</sequence>
<gene>
    <name evidence="1" type="primary">GATA</name>
    <name type="ordered locus">VIT_12s0028g01330</name>
</gene>
<proteinExistence type="inferred from homology"/>
<reference key="1">
    <citation type="journal article" date="2007" name="Nature">
        <title>The grapevine genome sequence suggests ancestral hexaploidization in major angiosperm phyla.</title>
        <authorList>
            <person name="Jaillon O."/>
            <person name="Aury J.-M."/>
            <person name="Noel B."/>
            <person name="Policriti A."/>
            <person name="Clepet C."/>
            <person name="Casagrande A."/>
            <person name="Choisne N."/>
            <person name="Aubourg S."/>
            <person name="Vitulo N."/>
            <person name="Jubin C."/>
            <person name="Vezzi A."/>
            <person name="Legeai F."/>
            <person name="Hugueney P."/>
            <person name="Dasilva C."/>
            <person name="Horner D."/>
            <person name="Mica E."/>
            <person name="Jublot D."/>
            <person name="Poulain J."/>
            <person name="Bruyere C."/>
            <person name="Billault A."/>
            <person name="Segurens B."/>
            <person name="Gouyvenoux M."/>
            <person name="Ugarte E."/>
            <person name="Cattonaro F."/>
            <person name="Anthouard V."/>
            <person name="Vico V."/>
            <person name="Del Fabbro C."/>
            <person name="Alaux M."/>
            <person name="Di Gaspero G."/>
            <person name="Dumas V."/>
            <person name="Felice N."/>
            <person name="Paillard S."/>
            <person name="Juman I."/>
            <person name="Moroldo M."/>
            <person name="Scalabrin S."/>
            <person name="Canaguier A."/>
            <person name="Le Clainche I."/>
            <person name="Malacrida G."/>
            <person name="Durand E."/>
            <person name="Pesole G."/>
            <person name="Laucou V."/>
            <person name="Chatelet P."/>
            <person name="Merdinoglu D."/>
            <person name="Delledonne M."/>
            <person name="Pezzotti M."/>
            <person name="Lecharny A."/>
            <person name="Scarpelli C."/>
            <person name="Artiguenave F."/>
            <person name="Pe M.E."/>
            <person name="Valle G."/>
            <person name="Morgante M."/>
            <person name="Caboche M."/>
            <person name="Adam-Blondon A.-F."/>
            <person name="Weissenbach J."/>
            <person name="Quetier F."/>
            <person name="Wincker P."/>
        </authorList>
    </citation>
    <scope>NUCLEOTIDE SEQUENCE [LARGE SCALE GENOMIC DNA]</scope>
    <source>
        <strain>cv. Pinot noir / PN40024</strain>
    </source>
</reference>
<organism>
    <name type="scientific">Vitis vinifera</name>
    <name type="common">Grape</name>
    <dbReference type="NCBI Taxonomy" id="29760"/>
    <lineage>
        <taxon>Eukaryota</taxon>
        <taxon>Viridiplantae</taxon>
        <taxon>Streptophyta</taxon>
        <taxon>Embryophyta</taxon>
        <taxon>Tracheophyta</taxon>
        <taxon>Spermatophyta</taxon>
        <taxon>Magnoliopsida</taxon>
        <taxon>eudicotyledons</taxon>
        <taxon>Gunneridae</taxon>
        <taxon>Pentapetalae</taxon>
        <taxon>rosids</taxon>
        <taxon>Vitales</taxon>
        <taxon>Vitaceae</taxon>
        <taxon>Viteae</taxon>
        <taxon>Vitis</taxon>
    </lineage>
</organism>
<name>GATA_VITVI</name>
<accession>E0CTY1</accession>
<feature type="chain" id="PRO_0000413344" description="Glutamyl-tRNA(Gln) amidotransferase subunit A, chloroplastic/mitochondrial">
    <location>
        <begin position="1"/>
        <end position="546"/>
    </location>
</feature>
<feature type="region of interest" description="Disordered" evidence="2">
    <location>
        <begin position="21"/>
        <end position="52"/>
    </location>
</feature>
<feature type="compositionally biased region" description="Polar residues" evidence="2">
    <location>
        <begin position="27"/>
        <end position="43"/>
    </location>
</feature>
<feature type="active site" description="Charge relay system" evidence="1">
    <location>
        <position position="123"/>
    </location>
</feature>
<feature type="active site" description="Charge relay system" evidence="1">
    <location>
        <position position="198"/>
    </location>
</feature>
<feature type="active site" description="Acyl-ester intermediate" evidence="1">
    <location>
        <position position="222"/>
    </location>
</feature>
<keyword id="KW-0067">ATP-binding</keyword>
<keyword id="KW-0150">Chloroplast</keyword>
<keyword id="KW-0436">Ligase</keyword>
<keyword id="KW-0496">Mitochondrion</keyword>
<keyword id="KW-0547">Nucleotide-binding</keyword>
<keyword id="KW-0934">Plastid</keyword>
<keyword id="KW-0648">Protein biosynthesis</keyword>
<keyword id="KW-1185">Reference proteome</keyword>
<comment type="function">
    <text evidence="1">Allows the formation of correctly charged Gln-tRNA(Gln) through the transamidation of misacylated Glu-tRNA(Gln) in chloroplasts and mitochondria. The reaction takes place in the presence of glutamine and ATP through an activated gamma-phospho-Glu-tRNA(Gln).</text>
</comment>
<comment type="catalytic activity">
    <reaction evidence="1">
        <text>L-glutamyl-tRNA(Gln) + L-glutamine + ATP + H2O = L-glutaminyl-tRNA(Gln) + L-glutamate + ADP + phosphate + H(+)</text>
        <dbReference type="Rhea" id="RHEA:17521"/>
        <dbReference type="Rhea" id="RHEA-COMP:9681"/>
        <dbReference type="Rhea" id="RHEA-COMP:9684"/>
        <dbReference type="ChEBI" id="CHEBI:15377"/>
        <dbReference type="ChEBI" id="CHEBI:15378"/>
        <dbReference type="ChEBI" id="CHEBI:29985"/>
        <dbReference type="ChEBI" id="CHEBI:30616"/>
        <dbReference type="ChEBI" id="CHEBI:43474"/>
        <dbReference type="ChEBI" id="CHEBI:58359"/>
        <dbReference type="ChEBI" id="CHEBI:78520"/>
        <dbReference type="ChEBI" id="CHEBI:78521"/>
        <dbReference type="ChEBI" id="CHEBI:456216"/>
        <dbReference type="EC" id="6.3.5.7"/>
    </reaction>
</comment>
<comment type="subunit">
    <text evidence="1">Subunit of the heterotrimeric GatCAB amidotransferase (AdT) complex, composed of A, B and C subunits.</text>
</comment>
<comment type="subcellular location">
    <subcellularLocation>
        <location evidence="1">Mitochondrion</location>
    </subcellularLocation>
    <subcellularLocation>
        <location evidence="1">Plastid</location>
        <location evidence="1">Chloroplast stroma</location>
    </subcellularLocation>
</comment>
<comment type="miscellaneous">
    <text evidence="1">This protein may be expected to contain an N-terminal transit peptide but none has been predicted.</text>
</comment>
<comment type="similarity">
    <text evidence="1">Belongs to the amidase family. GatA subfamily.</text>
</comment>
<protein>
    <recommendedName>
        <fullName evidence="1">Glutamyl-tRNA(Gln) amidotransferase subunit A, chloroplastic/mitochondrial</fullName>
        <shortName evidence="1">Glu-AdT subunit A</shortName>
        <ecNumber evidence="1">6.3.5.7</ecNumber>
    </recommendedName>
</protein>
<dbReference type="EC" id="6.3.5.7" evidence="1"/>
<dbReference type="EMBL" id="FN597034">
    <property type="protein sequence ID" value="CBI22047.3"/>
    <property type="molecule type" value="Genomic_DNA"/>
</dbReference>
<dbReference type="RefSeq" id="NP_001384849.1">
    <property type="nucleotide sequence ID" value="NM_001397920.1"/>
</dbReference>
<dbReference type="RefSeq" id="XP_002278150.1">
    <property type="nucleotide sequence ID" value="XM_002278114.4"/>
</dbReference>
<dbReference type="SMR" id="E0CTY1"/>
<dbReference type="FunCoup" id="E0CTY1">
    <property type="interactions" value="2305"/>
</dbReference>
<dbReference type="STRING" id="29760.E0CTY1"/>
<dbReference type="PaxDb" id="29760-VIT_12s0028g01330.t01"/>
<dbReference type="EnsemblPlants" id="Vitvi12g00115_t001">
    <property type="protein sequence ID" value="Vitvi12g00115_P001"/>
    <property type="gene ID" value="Vitvi12g00115"/>
</dbReference>
<dbReference type="GeneID" id="100247231"/>
<dbReference type="Gramene" id="Vitvi12g00115_t001">
    <property type="protein sequence ID" value="Vitvi12g00115_P001"/>
    <property type="gene ID" value="Vitvi12g00115"/>
</dbReference>
<dbReference type="eggNOG" id="KOG1211">
    <property type="taxonomic scope" value="Eukaryota"/>
</dbReference>
<dbReference type="HOGENOM" id="CLU_009600_0_3_1"/>
<dbReference type="InParanoid" id="E0CTY1"/>
<dbReference type="OMA" id="QPASYCG"/>
<dbReference type="OrthoDB" id="421993at2759"/>
<dbReference type="Proteomes" id="UP000009183">
    <property type="component" value="Chromosome 12"/>
</dbReference>
<dbReference type="GO" id="GO:0009570">
    <property type="term" value="C:chloroplast stroma"/>
    <property type="evidence" value="ECO:0007669"/>
    <property type="project" value="UniProtKB-SubCell"/>
</dbReference>
<dbReference type="GO" id="GO:0030956">
    <property type="term" value="C:glutamyl-tRNA(Gln) amidotransferase complex"/>
    <property type="evidence" value="ECO:0007669"/>
    <property type="project" value="UniProtKB-UniRule"/>
</dbReference>
<dbReference type="GO" id="GO:0005739">
    <property type="term" value="C:mitochondrion"/>
    <property type="evidence" value="ECO:0007669"/>
    <property type="project" value="UniProtKB-SubCell"/>
</dbReference>
<dbReference type="GO" id="GO:0005524">
    <property type="term" value="F:ATP binding"/>
    <property type="evidence" value="ECO:0007669"/>
    <property type="project" value="UniProtKB-KW"/>
</dbReference>
<dbReference type="GO" id="GO:0050567">
    <property type="term" value="F:glutaminyl-tRNA synthase (glutamine-hydrolyzing) activity"/>
    <property type="evidence" value="ECO:0000318"/>
    <property type="project" value="GO_Central"/>
</dbReference>
<dbReference type="GO" id="GO:0016811">
    <property type="term" value="F:hydrolase activity, acting on carbon-nitrogen (but not peptide) bonds, in linear amides"/>
    <property type="evidence" value="ECO:0007669"/>
    <property type="project" value="UniProtKB-ARBA"/>
</dbReference>
<dbReference type="GO" id="GO:0070681">
    <property type="term" value="P:glutaminyl-tRNAGln biosynthesis via transamidation"/>
    <property type="evidence" value="ECO:0007669"/>
    <property type="project" value="UniProtKB-UniRule"/>
</dbReference>
<dbReference type="GO" id="GO:0032543">
    <property type="term" value="P:mitochondrial translation"/>
    <property type="evidence" value="ECO:0007669"/>
    <property type="project" value="UniProtKB-UniRule"/>
</dbReference>
<dbReference type="Gene3D" id="3.90.1300.10">
    <property type="entry name" value="Amidase signature (AS) domain"/>
    <property type="match status" value="1"/>
</dbReference>
<dbReference type="HAMAP" id="MF_00120">
    <property type="entry name" value="GatA"/>
    <property type="match status" value="1"/>
</dbReference>
<dbReference type="InterPro" id="IPR000120">
    <property type="entry name" value="Amidase"/>
</dbReference>
<dbReference type="InterPro" id="IPR020556">
    <property type="entry name" value="Amidase_CS"/>
</dbReference>
<dbReference type="InterPro" id="IPR023631">
    <property type="entry name" value="Amidase_dom"/>
</dbReference>
<dbReference type="InterPro" id="IPR036928">
    <property type="entry name" value="AS_sf"/>
</dbReference>
<dbReference type="InterPro" id="IPR004412">
    <property type="entry name" value="GatA"/>
</dbReference>
<dbReference type="NCBIfam" id="TIGR00132">
    <property type="entry name" value="gatA"/>
    <property type="match status" value="1"/>
</dbReference>
<dbReference type="PANTHER" id="PTHR11895:SF7">
    <property type="entry name" value="GLUTAMYL-TRNA(GLN) AMIDOTRANSFERASE SUBUNIT A, MITOCHONDRIAL"/>
    <property type="match status" value="1"/>
</dbReference>
<dbReference type="PANTHER" id="PTHR11895">
    <property type="entry name" value="TRANSAMIDASE"/>
    <property type="match status" value="1"/>
</dbReference>
<dbReference type="Pfam" id="PF01425">
    <property type="entry name" value="Amidase"/>
    <property type="match status" value="1"/>
</dbReference>
<dbReference type="SUPFAM" id="SSF75304">
    <property type="entry name" value="Amidase signature (AS) enzymes"/>
    <property type="match status" value="1"/>
</dbReference>
<dbReference type="PROSITE" id="PS00571">
    <property type="entry name" value="AMIDASES"/>
    <property type="match status" value="1"/>
</dbReference>